<evidence type="ECO:0000255" key="1">
    <source>
        <dbReference type="HAMAP-Rule" id="MF_00129"/>
    </source>
</evidence>
<sequence>MKDPQSPNESFDIIVIGGGHAGCEAAITTAKLGFSTALFTINLDRIAWQPCNPAVGGPAKSQLVHEIDALGGIIGQLADETAIQKRILNASRGPAVWALRAQTDKREYSKRMIEILQNTDNLSLKEAMITELVIKEAETFSNNLKNKTKKIKGVKTFFGTYYYAKSIIITAGTFLEGRIWIGNKSMSAGRSGEQAAQGLTQSLHNLGIKTERLKTGTPARVDKKSISFDELDIQPSTASDKYFSFDPKIKNNMPQVSCHITRTTLKTHELIRNNLHLTPIYGGFIDSKGPRYCPSIEDKIVKFADKNSHQIFLEPEGINTPEIYVQGFSTGLPENIQLDLLRTLPGLNKCKMLRPAYAVEYEYIPATQLKSSLETIEIENLFSAGQINGTTGYEEAAAQGLVAGINATRKLNMKDPIIFSRESSYIGTMINDLITRDLKEPYRVLTSRSEYRLTLRGDNADRRLTPLGFEIGLIDERRWLAHKKKMKSLKEENSRLENTRLKCTDEIAKKIELDSGSKIKGSTTLKELLKRPNLHYSDFIRYDLVDKTLPISVIEGVEIDIKYEGYLKRQKNNIDQINRQSLKSLSSEINYDQIDTLSLEARENLNKIKPTNFGDASKIPGVSKADLTALLVWLKIKELKNEKKTSFAEKKLSS</sequence>
<name>MNMG_PROMP</name>
<proteinExistence type="inferred from homology"/>
<comment type="function">
    <text evidence="1">NAD-binding protein involved in the addition of a carboxymethylaminomethyl (cmnm) group at the wobble position (U34) of certain tRNAs, forming tRNA-cmnm(5)s(2)U34.</text>
</comment>
<comment type="cofactor">
    <cofactor evidence="1">
        <name>FAD</name>
        <dbReference type="ChEBI" id="CHEBI:57692"/>
    </cofactor>
</comment>
<comment type="subunit">
    <text evidence="1">Homodimer. Heterotetramer of two MnmE and two MnmG subunits.</text>
</comment>
<comment type="subcellular location">
    <subcellularLocation>
        <location evidence="1">Cytoplasm</location>
    </subcellularLocation>
</comment>
<comment type="similarity">
    <text evidence="1">Belongs to the MnmG family.</text>
</comment>
<gene>
    <name evidence="1" type="primary">mnmG</name>
    <name evidence="1" type="synonym">gidA</name>
    <name type="ordered locus">PMM1675</name>
</gene>
<organism>
    <name type="scientific">Prochlorococcus marinus subsp. pastoris (strain CCMP1986 / NIES-2087 / MED4)</name>
    <dbReference type="NCBI Taxonomy" id="59919"/>
    <lineage>
        <taxon>Bacteria</taxon>
        <taxon>Bacillati</taxon>
        <taxon>Cyanobacteriota</taxon>
        <taxon>Cyanophyceae</taxon>
        <taxon>Synechococcales</taxon>
        <taxon>Prochlorococcaceae</taxon>
        <taxon>Prochlorococcus</taxon>
    </lineage>
</organism>
<reference key="1">
    <citation type="journal article" date="2003" name="Nature">
        <title>Genome divergence in two Prochlorococcus ecotypes reflects oceanic niche differentiation.</title>
        <authorList>
            <person name="Rocap G."/>
            <person name="Larimer F.W."/>
            <person name="Lamerdin J.E."/>
            <person name="Malfatti S."/>
            <person name="Chain P."/>
            <person name="Ahlgren N.A."/>
            <person name="Arellano A."/>
            <person name="Coleman M."/>
            <person name="Hauser L."/>
            <person name="Hess W.R."/>
            <person name="Johnson Z.I."/>
            <person name="Land M.L."/>
            <person name="Lindell D."/>
            <person name="Post A.F."/>
            <person name="Regala W."/>
            <person name="Shah M."/>
            <person name="Shaw S.L."/>
            <person name="Steglich C."/>
            <person name="Sullivan M.B."/>
            <person name="Ting C.S."/>
            <person name="Tolonen A."/>
            <person name="Webb E.A."/>
            <person name="Zinser E.R."/>
            <person name="Chisholm S.W."/>
        </authorList>
    </citation>
    <scope>NUCLEOTIDE SEQUENCE [LARGE SCALE GENOMIC DNA]</scope>
    <source>
        <strain>CCMP1986 / NIES-2087 / MED4</strain>
    </source>
</reference>
<accession>Q7TU19</accession>
<keyword id="KW-0963">Cytoplasm</keyword>
<keyword id="KW-0274">FAD</keyword>
<keyword id="KW-0285">Flavoprotein</keyword>
<keyword id="KW-0520">NAD</keyword>
<keyword id="KW-0819">tRNA processing</keyword>
<protein>
    <recommendedName>
        <fullName evidence="1">tRNA uridine 5-carboxymethylaminomethyl modification enzyme MnmG</fullName>
    </recommendedName>
    <alternativeName>
        <fullName evidence="1">Glucose-inhibited division protein A</fullName>
    </alternativeName>
</protein>
<feature type="chain" id="PRO_0000117152" description="tRNA uridine 5-carboxymethylaminomethyl modification enzyme MnmG">
    <location>
        <begin position="1"/>
        <end position="654"/>
    </location>
</feature>
<feature type="binding site" evidence="1">
    <location>
        <begin position="17"/>
        <end position="22"/>
    </location>
    <ligand>
        <name>FAD</name>
        <dbReference type="ChEBI" id="CHEBI:57692"/>
    </ligand>
</feature>
<feature type="binding site" evidence="1">
    <location>
        <begin position="289"/>
        <end position="303"/>
    </location>
    <ligand>
        <name>NAD(+)</name>
        <dbReference type="ChEBI" id="CHEBI:57540"/>
    </ligand>
</feature>
<dbReference type="EMBL" id="BX548174">
    <property type="protein sequence ID" value="CAE20134.1"/>
    <property type="molecule type" value="Genomic_DNA"/>
</dbReference>
<dbReference type="RefSeq" id="WP_011133302.1">
    <property type="nucleotide sequence ID" value="NC_005072.1"/>
</dbReference>
<dbReference type="SMR" id="Q7TU19"/>
<dbReference type="STRING" id="59919.PMM1675"/>
<dbReference type="KEGG" id="pmm:PMM1675"/>
<dbReference type="eggNOG" id="COG0445">
    <property type="taxonomic scope" value="Bacteria"/>
</dbReference>
<dbReference type="HOGENOM" id="CLU_007831_2_2_3"/>
<dbReference type="OrthoDB" id="9815560at2"/>
<dbReference type="Proteomes" id="UP000001026">
    <property type="component" value="Chromosome"/>
</dbReference>
<dbReference type="GO" id="GO:0005737">
    <property type="term" value="C:cytoplasm"/>
    <property type="evidence" value="ECO:0007669"/>
    <property type="project" value="UniProtKB-SubCell"/>
</dbReference>
<dbReference type="GO" id="GO:0050660">
    <property type="term" value="F:flavin adenine dinucleotide binding"/>
    <property type="evidence" value="ECO:0007669"/>
    <property type="project" value="UniProtKB-UniRule"/>
</dbReference>
<dbReference type="GO" id="GO:0030488">
    <property type="term" value="P:tRNA methylation"/>
    <property type="evidence" value="ECO:0007669"/>
    <property type="project" value="TreeGrafter"/>
</dbReference>
<dbReference type="GO" id="GO:0002098">
    <property type="term" value="P:tRNA wobble uridine modification"/>
    <property type="evidence" value="ECO:0007669"/>
    <property type="project" value="InterPro"/>
</dbReference>
<dbReference type="FunFam" id="1.10.10.1800:FF:000001">
    <property type="entry name" value="tRNA uridine 5-carboxymethylaminomethyl modification enzyme MnmG"/>
    <property type="match status" value="1"/>
</dbReference>
<dbReference type="FunFam" id="1.10.150.570:FF:000001">
    <property type="entry name" value="tRNA uridine 5-carboxymethylaminomethyl modification enzyme MnmG"/>
    <property type="match status" value="1"/>
</dbReference>
<dbReference type="FunFam" id="3.50.50.60:FF:000094">
    <property type="entry name" value="tRNA uridine 5-carboxymethylaminomethyl modification enzyme MnmG"/>
    <property type="match status" value="1"/>
</dbReference>
<dbReference type="Gene3D" id="3.50.50.60">
    <property type="entry name" value="FAD/NAD(P)-binding domain"/>
    <property type="match status" value="2"/>
</dbReference>
<dbReference type="Gene3D" id="1.10.150.570">
    <property type="entry name" value="GidA associated domain, C-terminal subdomain"/>
    <property type="match status" value="1"/>
</dbReference>
<dbReference type="Gene3D" id="1.10.10.1800">
    <property type="entry name" value="tRNA uridine 5-carboxymethylaminomethyl modification enzyme MnmG/GidA"/>
    <property type="match status" value="1"/>
</dbReference>
<dbReference type="HAMAP" id="MF_00129">
    <property type="entry name" value="MnmG_GidA"/>
    <property type="match status" value="1"/>
</dbReference>
<dbReference type="InterPro" id="IPR036188">
    <property type="entry name" value="FAD/NAD-bd_sf"/>
</dbReference>
<dbReference type="InterPro" id="IPR049312">
    <property type="entry name" value="GIDA_C_N"/>
</dbReference>
<dbReference type="InterPro" id="IPR004416">
    <property type="entry name" value="MnmG"/>
</dbReference>
<dbReference type="InterPro" id="IPR002218">
    <property type="entry name" value="MnmG-rel"/>
</dbReference>
<dbReference type="InterPro" id="IPR020595">
    <property type="entry name" value="MnmG-rel_CS"/>
</dbReference>
<dbReference type="InterPro" id="IPR026904">
    <property type="entry name" value="MnmG_C"/>
</dbReference>
<dbReference type="InterPro" id="IPR047001">
    <property type="entry name" value="MnmG_C_subdom"/>
</dbReference>
<dbReference type="InterPro" id="IPR044920">
    <property type="entry name" value="MnmG_C_subdom_sf"/>
</dbReference>
<dbReference type="InterPro" id="IPR040131">
    <property type="entry name" value="MnmG_N"/>
</dbReference>
<dbReference type="NCBIfam" id="TIGR00136">
    <property type="entry name" value="mnmG_gidA"/>
    <property type="match status" value="1"/>
</dbReference>
<dbReference type="PANTHER" id="PTHR11806">
    <property type="entry name" value="GLUCOSE INHIBITED DIVISION PROTEIN A"/>
    <property type="match status" value="1"/>
</dbReference>
<dbReference type="PANTHER" id="PTHR11806:SF0">
    <property type="entry name" value="PROTEIN MTO1 HOMOLOG, MITOCHONDRIAL"/>
    <property type="match status" value="1"/>
</dbReference>
<dbReference type="Pfam" id="PF01134">
    <property type="entry name" value="GIDA"/>
    <property type="match status" value="1"/>
</dbReference>
<dbReference type="Pfam" id="PF21680">
    <property type="entry name" value="GIDA_C_1st"/>
    <property type="match status" value="1"/>
</dbReference>
<dbReference type="Pfam" id="PF13932">
    <property type="entry name" value="SAM_GIDA_C"/>
    <property type="match status" value="1"/>
</dbReference>
<dbReference type="SMART" id="SM01228">
    <property type="entry name" value="GIDA_assoc_3"/>
    <property type="match status" value="1"/>
</dbReference>
<dbReference type="SUPFAM" id="SSF51905">
    <property type="entry name" value="FAD/NAD(P)-binding domain"/>
    <property type="match status" value="1"/>
</dbReference>
<dbReference type="PROSITE" id="PS01280">
    <property type="entry name" value="GIDA_1"/>
    <property type="match status" value="1"/>
</dbReference>
<dbReference type="PROSITE" id="PS01281">
    <property type="entry name" value="GIDA_2"/>
    <property type="match status" value="1"/>
</dbReference>